<proteinExistence type="inferred from homology"/>
<name>CCSA_PHAAO</name>
<gene>
    <name evidence="1" type="primary">ccsA</name>
</gene>
<sequence>MIFATLEHILTHISFSIISIVIIIHLMNLLVYEIEELRNSLEKGMIATFSSITGFLVTRWISSGHFPLSNLYESLIFLSWSLSIIHIILYIRNYKNDLNAITAPSAIFTQGFATSGLSTEMHQPAILVPALQSQWLMMHVSMMLLSYAALLCGSLLSVALIVITFQKKTDFFLKNKNFYSLRKSFFFGNMEYLNEKGSILKKTSLLSFKNFYKYQLIQHLDSWSYRVISLGFTFLTIGILSGAVWANEAWGSYWNWDPKETWAFITWTIFAIYLHTRKNSKLQDQVTNSAFVASIGFLLIWICYFGINLLGIGFHSYGSFQ</sequence>
<organism>
    <name type="scientific">Phalaenopsis aphrodite subsp. formosana</name>
    <name type="common">Moth orchid</name>
    <dbReference type="NCBI Taxonomy" id="308872"/>
    <lineage>
        <taxon>Eukaryota</taxon>
        <taxon>Viridiplantae</taxon>
        <taxon>Streptophyta</taxon>
        <taxon>Embryophyta</taxon>
        <taxon>Tracheophyta</taxon>
        <taxon>Spermatophyta</taxon>
        <taxon>Magnoliopsida</taxon>
        <taxon>Liliopsida</taxon>
        <taxon>Asparagales</taxon>
        <taxon>Orchidaceae</taxon>
        <taxon>Epidendroideae</taxon>
        <taxon>Vandeae</taxon>
        <taxon>Aeridinae</taxon>
        <taxon>Phalaenopsis</taxon>
    </lineage>
</organism>
<evidence type="ECO:0000255" key="1">
    <source>
        <dbReference type="HAMAP-Rule" id="MF_01391"/>
    </source>
</evidence>
<protein>
    <recommendedName>
        <fullName evidence="1">Cytochrome c biogenesis protein CcsA</fullName>
    </recommendedName>
</protein>
<dbReference type="EMBL" id="AY916449">
    <property type="protein sequence ID" value="AAW82546.1"/>
    <property type="molecule type" value="Genomic_DNA"/>
</dbReference>
<dbReference type="RefSeq" id="YP_358640.1">
    <property type="nucleotide sequence ID" value="NC_007499.1"/>
</dbReference>
<dbReference type="SMR" id="Q3BAH8"/>
<dbReference type="GeneID" id="3741739"/>
<dbReference type="GO" id="GO:0009535">
    <property type="term" value="C:chloroplast thylakoid membrane"/>
    <property type="evidence" value="ECO:0007669"/>
    <property type="project" value="UniProtKB-SubCell"/>
</dbReference>
<dbReference type="GO" id="GO:0005886">
    <property type="term" value="C:plasma membrane"/>
    <property type="evidence" value="ECO:0007669"/>
    <property type="project" value="TreeGrafter"/>
</dbReference>
<dbReference type="GO" id="GO:0020037">
    <property type="term" value="F:heme binding"/>
    <property type="evidence" value="ECO:0007669"/>
    <property type="project" value="InterPro"/>
</dbReference>
<dbReference type="GO" id="GO:0017004">
    <property type="term" value="P:cytochrome complex assembly"/>
    <property type="evidence" value="ECO:0007669"/>
    <property type="project" value="UniProtKB-UniRule"/>
</dbReference>
<dbReference type="HAMAP" id="MF_01391">
    <property type="entry name" value="CytC_CcsA"/>
    <property type="match status" value="1"/>
</dbReference>
<dbReference type="InterPro" id="IPR002541">
    <property type="entry name" value="Cyt_c_assembly"/>
</dbReference>
<dbReference type="InterPro" id="IPR017562">
    <property type="entry name" value="Cyt_c_biogenesis_CcsA"/>
</dbReference>
<dbReference type="InterPro" id="IPR045062">
    <property type="entry name" value="Cyt_c_biogenesis_CcsA/CcmC"/>
</dbReference>
<dbReference type="NCBIfam" id="TIGR03144">
    <property type="entry name" value="cytochr_II_ccsB"/>
    <property type="match status" value="1"/>
</dbReference>
<dbReference type="PANTHER" id="PTHR30071:SF1">
    <property type="entry name" value="CYTOCHROME B_B6 PROTEIN-RELATED"/>
    <property type="match status" value="1"/>
</dbReference>
<dbReference type="PANTHER" id="PTHR30071">
    <property type="entry name" value="HEME EXPORTER PROTEIN C"/>
    <property type="match status" value="1"/>
</dbReference>
<dbReference type="Pfam" id="PF01578">
    <property type="entry name" value="Cytochrom_C_asm"/>
    <property type="match status" value="1"/>
</dbReference>
<keyword id="KW-0150">Chloroplast</keyword>
<keyword id="KW-0201">Cytochrome c-type biogenesis</keyword>
<keyword id="KW-0472">Membrane</keyword>
<keyword id="KW-0934">Plastid</keyword>
<keyword id="KW-0793">Thylakoid</keyword>
<keyword id="KW-0812">Transmembrane</keyword>
<keyword id="KW-1133">Transmembrane helix</keyword>
<geneLocation type="chloroplast"/>
<comment type="function">
    <text evidence="1">Required during biogenesis of c-type cytochromes (cytochrome c6 and cytochrome f) at the step of heme attachment.</text>
</comment>
<comment type="subunit">
    <text evidence="1">May interact with Ccs1.</text>
</comment>
<comment type="subcellular location">
    <subcellularLocation>
        <location evidence="1">Plastid</location>
        <location evidence="1">Chloroplast thylakoid membrane</location>
        <topology evidence="1">Multi-pass membrane protein</topology>
    </subcellularLocation>
</comment>
<comment type="similarity">
    <text evidence="1">Belongs to the CcmF/CycK/Ccl1/NrfE/CcsA family.</text>
</comment>
<reference key="1">
    <citation type="journal article" date="2006" name="Mol. Biol. Evol.">
        <title>The chloroplast genome of Phalaenopsis aphrodite (Orchidaceae): comparative analysis of evolutionary rate with that of grasses and its phylogenetic implications.</title>
        <authorList>
            <person name="Chang C.-C."/>
            <person name="Lin H.-C."/>
            <person name="Lin I.-P."/>
            <person name="Chow T.-Y."/>
            <person name="Chen H.-H."/>
            <person name="Chen W.-H."/>
            <person name="Cheng C.-H."/>
            <person name="Lin C.-Y."/>
            <person name="Liu S.-M."/>
            <person name="Chang C.-C."/>
            <person name="Chaw S.-M."/>
        </authorList>
    </citation>
    <scope>NUCLEOTIDE SEQUENCE [LARGE SCALE GENOMIC DNA]</scope>
    <source>
        <strain>cv. Taisugar TS-97</strain>
    </source>
</reference>
<feature type="chain" id="PRO_0000353783" description="Cytochrome c biogenesis protein CcsA">
    <location>
        <begin position="1"/>
        <end position="321"/>
    </location>
</feature>
<feature type="transmembrane region" description="Helical" evidence="1">
    <location>
        <begin position="12"/>
        <end position="32"/>
    </location>
</feature>
<feature type="transmembrane region" description="Helical" evidence="1">
    <location>
        <begin position="45"/>
        <end position="62"/>
    </location>
</feature>
<feature type="transmembrane region" description="Helical" evidence="1">
    <location>
        <begin position="71"/>
        <end position="91"/>
    </location>
</feature>
<feature type="transmembrane region" description="Helical" evidence="1">
    <location>
        <begin position="98"/>
        <end position="117"/>
    </location>
</feature>
<feature type="transmembrane region" description="Helical" evidence="1">
    <location>
        <begin position="143"/>
        <end position="163"/>
    </location>
</feature>
<feature type="transmembrane region" description="Helical" evidence="1">
    <location>
        <begin position="227"/>
        <end position="247"/>
    </location>
</feature>
<feature type="transmembrane region" description="Helical" evidence="1">
    <location>
        <begin position="260"/>
        <end position="277"/>
    </location>
</feature>
<feature type="transmembrane region" description="Helical" evidence="1">
    <location>
        <begin position="292"/>
        <end position="312"/>
    </location>
</feature>
<accession>Q3BAH8</accession>